<proteinExistence type="evidence at transcript level"/>
<reference key="1">
    <citation type="journal article" date="1991" name="J. Cell Sci.">
        <title>bimA encodes a member of the tetratricopeptide repeat family of proteins and is required for the completion of mitosis in Aspergillus nidulans.</title>
        <authorList>
            <person name="O'Donnell K.L."/>
            <person name="Osmani A.H."/>
            <person name="Osmani S.A."/>
            <person name="Morris N.R."/>
        </authorList>
    </citation>
    <scope>NUCLEOTIDE SEQUENCE [MRNA]</scope>
    <source>
        <strain>R153</strain>
    </source>
</reference>
<reference key="2">
    <citation type="journal article" date="2005" name="Nature">
        <title>Sequencing of Aspergillus nidulans and comparative analysis with A. fumigatus and A. oryzae.</title>
        <authorList>
            <person name="Galagan J.E."/>
            <person name="Calvo S.E."/>
            <person name="Cuomo C."/>
            <person name="Ma L.-J."/>
            <person name="Wortman J.R."/>
            <person name="Batzoglou S."/>
            <person name="Lee S.-I."/>
            <person name="Bastuerkmen M."/>
            <person name="Spevak C.C."/>
            <person name="Clutterbuck J."/>
            <person name="Kapitonov V."/>
            <person name="Jurka J."/>
            <person name="Scazzocchio C."/>
            <person name="Farman M.L."/>
            <person name="Butler J."/>
            <person name="Purcell S."/>
            <person name="Harris S."/>
            <person name="Braus G.H."/>
            <person name="Draht O."/>
            <person name="Busch S."/>
            <person name="D'Enfert C."/>
            <person name="Bouchier C."/>
            <person name="Goldman G.H."/>
            <person name="Bell-Pedersen D."/>
            <person name="Griffiths-Jones S."/>
            <person name="Doonan J.H."/>
            <person name="Yu J."/>
            <person name="Vienken K."/>
            <person name="Pain A."/>
            <person name="Freitag M."/>
            <person name="Selker E.U."/>
            <person name="Archer D.B."/>
            <person name="Penalva M.A."/>
            <person name="Oakley B.R."/>
            <person name="Momany M."/>
            <person name="Tanaka T."/>
            <person name="Kumagai T."/>
            <person name="Asai K."/>
            <person name="Machida M."/>
            <person name="Nierman W.C."/>
            <person name="Denning D.W."/>
            <person name="Caddick M.X."/>
            <person name="Hynes M."/>
            <person name="Paoletti M."/>
            <person name="Fischer R."/>
            <person name="Miller B.L."/>
            <person name="Dyer P.S."/>
            <person name="Sachs M.S."/>
            <person name="Osmani S.A."/>
            <person name="Birren B.W."/>
        </authorList>
    </citation>
    <scope>NUCLEOTIDE SEQUENCE [LARGE SCALE GENOMIC DNA]</scope>
    <source>
        <strain>FGSC A4 / ATCC 38163 / CBS 112.46 / NRRL 194 / M139</strain>
    </source>
</reference>
<reference key="3">
    <citation type="journal article" date="2009" name="Fungal Genet. Biol.">
        <title>The 2008 update of the Aspergillus nidulans genome annotation: a community effort.</title>
        <authorList>
            <person name="Wortman J.R."/>
            <person name="Gilsenan J.M."/>
            <person name="Joardar V."/>
            <person name="Deegan J."/>
            <person name="Clutterbuck J."/>
            <person name="Andersen M.R."/>
            <person name="Archer D."/>
            <person name="Bencina M."/>
            <person name="Braus G."/>
            <person name="Coutinho P."/>
            <person name="von Dohren H."/>
            <person name="Doonan J."/>
            <person name="Driessen A.J."/>
            <person name="Durek P."/>
            <person name="Espeso E."/>
            <person name="Fekete E."/>
            <person name="Flipphi M."/>
            <person name="Estrada C.G."/>
            <person name="Geysens S."/>
            <person name="Goldman G."/>
            <person name="de Groot P.W."/>
            <person name="Hansen K."/>
            <person name="Harris S.D."/>
            <person name="Heinekamp T."/>
            <person name="Helmstaedt K."/>
            <person name="Henrissat B."/>
            <person name="Hofmann G."/>
            <person name="Homan T."/>
            <person name="Horio T."/>
            <person name="Horiuchi H."/>
            <person name="James S."/>
            <person name="Jones M."/>
            <person name="Karaffa L."/>
            <person name="Karanyi Z."/>
            <person name="Kato M."/>
            <person name="Keller N."/>
            <person name="Kelly D.E."/>
            <person name="Kiel J.A."/>
            <person name="Kim J.M."/>
            <person name="van der Klei I.J."/>
            <person name="Klis F.M."/>
            <person name="Kovalchuk A."/>
            <person name="Krasevec N."/>
            <person name="Kubicek C.P."/>
            <person name="Liu B."/>
            <person name="Maccabe A."/>
            <person name="Meyer V."/>
            <person name="Mirabito P."/>
            <person name="Miskei M."/>
            <person name="Mos M."/>
            <person name="Mullins J."/>
            <person name="Nelson D.R."/>
            <person name="Nielsen J."/>
            <person name="Oakley B.R."/>
            <person name="Osmani S.A."/>
            <person name="Pakula T."/>
            <person name="Paszewski A."/>
            <person name="Paulsen I."/>
            <person name="Pilsyk S."/>
            <person name="Pocsi I."/>
            <person name="Punt P.J."/>
            <person name="Ram A.F."/>
            <person name="Ren Q."/>
            <person name="Robellet X."/>
            <person name="Robson G."/>
            <person name="Seiboth B."/>
            <person name="van Solingen P."/>
            <person name="Specht T."/>
            <person name="Sun J."/>
            <person name="Taheri-Talesh N."/>
            <person name="Takeshita N."/>
            <person name="Ussery D."/>
            <person name="vanKuyk P.A."/>
            <person name="Visser H."/>
            <person name="van de Vondervoort P.J."/>
            <person name="de Vries R.P."/>
            <person name="Walton J."/>
            <person name="Xiang X."/>
            <person name="Xiong Y."/>
            <person name="Zeng A.P."/>
            <person name="Brandt B.W."/>
            <person name="Cornell M.J."/>
            <person name="van den Hondel C.A."/>
            <person name="Visser J."/>
            <person name="Oliver S.G."/>
            <person name="Turner G."/>
        </authorList>
    </citation>
    <scope>GENOME REANNOTATION</scope>
    <source>
        <strain>FGSC A4 / ATCC 38163 / CBS 112.46 / NRRL 194 / M139</strain>
    </source>
</reference>
<evidence type="ECO:0000256" key="1">
    <source>
        <dbReference type="SAM" id="MobiDB-lite"/>
    </source>
</evidence>
<evidence type="ECO:0000305" key="2"/>
<keyword id="KW-0131">Cell cycle</keyword>
<keyword id="KW-0132">Cell division</keyword>
<keyword id="KW-0498">Mitosis</keyword>
<keyword id="KW-0539">Nucleus</keyword>
<keyword id="KW-1185">Reference proteome</keyword>
<keyword id="KW-0677">Repeat</keyword>
<keyword id="KW-0802">TPR repeat</keyword>
<feature type="chain" id="PRO_0000106265" description="Protein bimA">
    <location>
        <begin position="1"/>
        <end position="806"/>
    </location>
</feature>
<feature type="repeat" description="TPR 1">
    <location>
        <begin position="76"/>
        <end position="109"/>
    </location>
</feature>
<feature type="repeat" description="TPR 2">
    <location>
        <begin position="127"/>
        <end position="160"/>
    </location>
</feature>
<feature type="repeat" description="TPR 3">
    <location>
        <begin position="513"/>
        <end position="546"/>
    </location>
</feature>
<feature type="repeat" description="TPR 4">
    <location>
        <begin position="581"/>
        <end position="614"/>
    </location>
</feature>
<feature type="repeat" description="TPR 5">
    <location>
        <begin position="616"/>
        <end position="648"/>
    </location>
</feature>
<feature type="repeat" description="TPR 6">
    <location>
        <begin position="649"/>
        <end position="682"/>
    </location>
</feature>
<feature type="repeat" description="TPR 7">
    <location>
        <begin position="684"/>
        <end position="716"/>
    </location>
</feature>
<feature type="repeat" description="TPR 8">
    <location>
        <begin position="751"/>
        <end position="784"/>
    </location>
</feature>
<feature type="region of interest" description="Disordered" evidence="1">
    <location>
        <begin position="202"/>
        <end position="348"/>
    </location>
</feature>
<feature type="region of interest" description="BimA domain">
    <location>
        <begin position="260"/>
        <end position="399"/>
    </location>
</feature>
<feature type="region of interest" description="Disordered" evidence="1">
    <location>
        <begin position="353"/>
        <end position="372"/>
    </location>
</feature>
<feature type="region of interest" description="Disordered" evidence="1">
    <location>
        <begin position="401"/>
        <end position="460"/>
    </location>
</feature>
<feature type="compositionally biased region" description="Polar residues" evidence="1">
    <location>
        <begin position="224"/>
        <end position="237"/>
    </location>
</feature>
<feature type="compositionally biased region" description="Low complexity" evidence="1">
    <location>
        <begin position="246"/>
        <end position="257"/>
    </location>
</feature>
<feature type="compositionally biased region" description="Basic and acidic residues" evidence="1">
    <location>
        <begin position="328"/>
        <end position="348"/>
    </location>
</feature>
<feature type="compositionally biased region" description="Polar residues" evidence="1">
    <location>
        <begin position="408"/>
        <end position="421"/>
    </location>
</feature>
<feature type="compositionally biased region" description="Basic and acidic residues" evidence="1">
    <location>
        <begin position="432"/>
        <end position="445"/>
    </location>
</feature>
<feature type="compositionally biased region" description="Low complexity" evidence="1">
    <location>
        <begin position="446"/>
        <end position="459"/>
    </location>
</feature>
<dbReference type="EMBL" id="X59269">
    <property type="protein sequence ID" value="CAA41959.1"/>
    <property type="molecule type" value="mRNA"/>
</dbReference>
<dbReference type="EMBL" id="AACD01000105">
    <property type="protein sequence ID" value="EAA57924.1"/>
    <property type="status" value="ALT_SEQ"/>
    <property type="molecule type" value="Genomic_DNA"/>
</dbReference>
<dbReference type="EMBL" id="BN001301">
    <property type="protein sequence ID" value="CBF70105.1"/>
    <property type="status" value="ALT_SEQ"/>
    <property type="molecule type" value="Genomic_DNA"/>
</dbReference>
<dbReference type="PIR" id="A53256">
    <property type="entry name" value="A53256"/>
</dbReference>
<dbReference type="RefSeq" id="XP_663742.1">
    <property type="nucleotide sequence ID" value="XM_658650.1"/>
</dbReference>
<dbReference type="SMR" id="P17885"/>
<dbReference type="FunCoup" id="P17885">
    <property type="interactions" value="843"/>
</dbReference>
<dbReference type="STRING" id="227321.P17885"/>
<dbReference type="eggNOG" id="KOG1126">
    <property type="taxonomic scope" value="Eukaryota"/>
</dbReference>
<dbReference type="HOGENOM" id="CLU_008850_0_1_1"/>
<dbReference type="InParanoid" id="P17885"/>
<dbReference type="Proteomes" id="UP000000560">
    <property type="component" value="Chromosome I"/>
</dbReference>
<dbReference type="GO" id="GO:0005680">
    <property type="term" value="C:anaphase-promoting complex"/>
    <property type="evidence" value="ECO:0000318"/>
    <property type="project" value="GO_Central"/>
</dbReference>
<dbReference type="GO" id="GO:0005737">
    <property type="term" value="C:cytoplasm"/>
    <property type="evidence" value="ECO:0000318"/>
    <property type="project" value="GO_Central"/>
</dbReference>
<dbReference type="GO" id="GO:0031145">
    <property type="term" value="P:anaphase-promoting complex-dependent catabolic process"/>
    <property type="evidence" value="ECO:0000318"/>
    <property type="project" value="GO_Central"/>
</dbReference>
<dbReference type="GO" id="GO:0051301">
    <property type="term" value="P:cell division"/>
    <property type="evidence" value="ECO:0000318"/>
    <property type="project" value="GO_Central"/>
</dbReference>
<dbReference type="GO" id="GO:0007091">
    <property type="term" value="P:metaphase/anaphase transition of mitotic cell cycle"/>
    <property type="evidence" value="ECO:0000318"/>
    <property type="project" value="GO_Central"/>
</dbReference>
<dbReference type="GO" id="GO:0016567">
    <property type="term" value="P:protein ubiquitination"/>
    <property type="evidence" value="ECO:0000318"/>
    <property type="project" value="GO_Central"/>
</dbReference>
<dbReference type="FunFam" id="1.25.40.10:FF:000018">
    <property type="entry name" value="Cell division cycle protein 27 homolog B"/>
    <property type="match status" value="1"/>
</dbReference>
<dbReference type="Gene3D" id="1.25.40.10">
    <property type="entry name" value="Tetratricopeptide repeat domain"/>
    <property type="match status" value="4"/>
</dbReference>
<dbReference type="InterPro" id="IPR011990">
    <property type="entry name" value="TPR-like_helical_dom_sf"/>
</dbReference>
<dbReference type="InterPro" id="IPR019734">
    <property type="entry name" value="TPR_rpt"/>
</dbReference>
<dbReference type="PANTHER" id="PTHR12558">
    <property type="entry name" value="CELL DIVISION CYCLE 16,23,27"/>
    <property type="match status" value="1"/>
</dbReference>
<dbReference type="PANTHER" id="PTHR12558:SF13">
    <property type="entry name" value="CELL DIVISION CYCLE PROTEIN 27 HOMOLOG"/>
    <property type="match status" value="1"/>
</dbReference>
<dbReference type="Pfam" id="PF12895">
    <property type="entry name" value="ANAPC3"/>
    <property type="match status" value="1"/>
</dbReference>
<dbReference type="Pfam" id="PF00515">
    <property type="entry name" value="TPR_1"/>
    <property type="match status" value="2"/>
</dbReference>
<dbReference type="Pfam" id="PF14559">
    <property type="entry name" value="TPR_19"/>
    <property type="match status" value="1"/>
</dbReference>
<dbReference type="SMART" id="SM00028">
    <property type="entry name" value="TPR"/>
    <property type="match status" value="8"/>
</dbReference>
<dbReference type="SUPFAM" id="SSF48452">
    <property type="entry name" value="TPR-like"/>
    <property type="match status" value="3"/>
</dbReference>
<dbReference type="PROSITE" id="PS50005">
    <property type="entry name" value="TPR"/>
    <property type="match status" value="8"/>
</dbReference>
<dbReference type="PROSITE" id="PS50293">
    <property type="entry name" value="TPR_REGION"/>
    <property type="match status" value="2"/>
</dbReference>
<sequence length="806" mass="89715">MTPSTSHISSQLRQLIYYHLDNNLARNALFLAGRLHAYEPRTSEASYLLALCYLQNGQVKAAWETSKHFGSRGAHLGCSYVYAQACLDLGKYTDGINALERSKGQWTSRNHWNKHSETRRQHLPDAAAVLCLQGKLWQAHKEHNKAVECYAAALKLNPFMWDAFLNLCETGVDLRVSNIYKMSPELYSMVSSAALEDVESQVLPPDGPLQTQVNPNPSLDPFTAGTTRSDSTSTHGSSALWEKLNGSTVSVASSGTGPHLPREGMETPGGQSSESDDPRVTNGNGTDVFEPPLAPAKKNRTIQTIGGDHPMDPPPKMRPTGIRPRTRTKFESDEGHTERDAGMGHRLGDRKRTVSGQVAHPSVPHSTDQGVGQRRSVRLFNQIKPSTNKISSTALGVKEGREVKKVRTTGNKARTTTSSNVGRVVSGNNRRHAGEIHDGDSKEYRGTSSTSNGSQNASSKLAISERTKSVEALAWILDLFFKIASGYFCLSRYKCSDAIQIFSSLSQGQRETPWVLAQIGRAYYEQAMYTEAEKYFVRVKAMAPSRLEDMEIYSTVLWHLKNDVELAYLAHELMDVDRLSPEAWCAVGNSFSHQRDHDQALKCFKRATQLDPHFAYGFTLQGHEYVANEEYDKALDAYRSGINADSRHYNAWYGLGTVYDKMGKLDFAEQHFRNAAKINPSNAVLICCIGLVLEKMNNPKSALIQYNRACTLAPHSVLARFRKARALMKLQDLKSALTELKVLKDMAPDEANVHYLLGKLYKMLRDKGNAIKHFTTALNLDPKAAQYIKDAMEALDDDEEDEEDMA</sequence>
<organism>
    <name type="scientific">Emericella nidulans (strain FGSC A4 / ATCC 38163 / CBS 112.46 / NRRL 194 / M139)</name>
    <name type="common">Aspergillus nidulans</name>
    <dbReference type="NCBI Taxonomy" id="227321"/>
    <lineage>
        <taxon>Eukaryota</taxon>
        <taxon>Fungi</taxon>
        <taxon>Dikarya</taxon>
        <taxon>Ascomycota</taxon>
        <taxon>Pezizomycotina</taxon>
        <taxon>Eurotiomycetes</taxon>
        <taxon>Eurotiomycetidae</taxon>
        <taxon>Eurotiales</taxon>
        <taxon>Aspergillaceae</taxon>
        <taxon>Aspergillus</taxon>
        <taxon>Aspergillus subgen. Nidulantes</taxon>
    </lineage>
</organism>
<protein>
    <recommendedName>
        <fullName>Protein bimA</fullName>
    </recommendedName>
</protein>
<gene>
    <name type="primary">bimA</name>
    <name type="ORF">AN6138</name>
</gene>
<comment type="function">
    <text>Required for the completion of mitosis in Aspergillus nidulans.</text>
</comment>
<comment type="subcellular location">
    <subcellularLocation>
        <location evidence="2">Nucleus</location>
    </subcellularLocation>
</comment>
<comment type="similarity">
    <text evidence="2">Belongs to the APC3/CDC27 family.</text>
</comment>
<comment type="sequence caution" evidence="2">
    <conflict type="erroneous gene model prediction">
        <sequence resource="EMBL-CDS" id="CBF70105"/>
    </conflict>
</comment>
<comment type="sequence caution" evidence="2">
    <conflict type="erroneous gene model prediction">
        <sequence resource="EMBL-CDS" id="EAA57924"/>
    </conflict>
</comment>
<accession>P17885</accession>
<accession>C8V2B7</accession>
<accession>Q5AZZ2</accession>
<name>BIMA_EMENI</name>